<gene>
    <name type="primary">Cdhr1</name>
    <name type="synonym">Kiaa1775</name>
    <name type="synonym">Pcdh21</name>
    <name type="synonym">Prcad</name>
</gene>
<proteinExistence type="evidence at transcript level"/>
<organism>
    <name type="scientific">Rattus norvegicus</name>
    <name type="common">Rat</name>
    <dbReference type="NCBI Taxonomy" id="10116"/>
    <lineage>
        <taxon>Eukaryota</taxon>
        <taxon>Metazoa</taxon>
        <taxon>Chordata</taxon>
        <taxon>Craniata</taxon>
        <taxon>Vertebrata</taxon>
        <taxon>Euteleostomi</taxon>
        <taxon>Mammalia</taxon>
        <taxon>Eutheria</taxon>
        <taxon>Euarchontoglires</taxon>
        <taxon>Glires</taxon>
        <taxon>Rodentia</taxon>
        <taxon>Myomorpha</taxon>
        <taxon>Muroidea</taxon>
        <taxon>Muridae</taxon>
        <taxon>Murinae</taxon>
        <taxon>Rattus</taxon>
    </lineage>
</organism>
<protein>
    <recommendedName>
        <fullName>Cadherin-related family member 1</fullName>
    </recommendedName>
    <alternativeName>
        <fullName>MT-protocadherin</fullName>
    </alternativeName>
    <alternativeName>
        <fullName>Photoreceptor cadherin</fullName>
        <shortName>prCAD</shortName>
    </alternativeName>
    <alternativeName>
        <fullName>Protocadherin-21</fullName>
    </alternativeName>
</protein>
<keyword id="KW-0106">Calcium</keyword>
<keyword id="KW-0130">Cell adhesion</keyword>
<keyword id="KW-1003">Cell membrane</keyword>
<keyword id="KW-0325">Glycoprotein</keyword>
<keyword id="KW-0472">Membrane</keyword>
<keyword id="KW-0675">Receptor</keyword>
<keyword id="KW-1185">Reference proteome</keyword>
<keyword id="KW-0677">Repeat</keyword>
<keyword id="KW-0732">Signal</keyword>
<keyword id="KW-0812">Transmembrane</keyword>
<keyword id="KW-1133">Transmembrane helix</keyword>
<comment type="function">
    <text evidence="1">Potential calcium-dependent cell-adhesion protein. May be required for the structural integrity of the outer segment (OS) of photoreceptor cells (By similarity).</text>
</comment>
<comment type="subunit">
    <text evidence="1">Interacts with PROM1.</text>
</comment>
<comment type="subcellular location">
    <subcellularLocation>
        <location evidence="1">Cell membrane</location>
        <topology evidence="1">Single-pass membrane protein</topology>
    </subcellularLocation>
    <text evidence="1">Localized at the junction between the inner and outer segments of rod and cone photoreceptors cells. Confined to the base of the OS. Localized on the edges of nascent evaginating disks on the side of the OS opposite the connecting cilium. Expressed at postnatal day 2 at the apical tip of the rod photoreceptor cells, the site of the developing OS. Colocalized with rhodopsin between postnatal days 2 and 9 at the base of the growing OS region (By similarity).</text>
</comment>
<comment type="tissue specificity">
    <text evidence="5 6">Expressed in the retina. Strongly expressed by the mitral and tufted cells in the main and accessory olfactory bulbs. Also expressed in the septum and olfactory cortex. Weakly expressed in the triangular septal nucleus and piriform cortex.</text>
</comment>
<comment type="PTM">
    <text evidence="1">Undergoes proteolytic cleavage; produces a soluble 95 kDa N-terminal fragment and a 25 kDa cell-associated C-terminal fragment.</text>
</comment>
<reference key="1">
    <citation type="journal article" date="2001" name="Brain Res. Mol. Brain Res.">
        <title>Identification of three novel non-classical cadherin genes through comprehensive analysis of large cDNAs.</title>
        <authorList>
            <person name="Nakajima D."/>
            <person name="Nakayama M."/>
            <person name="Kikuno R."/>
            <person name="Hirosawa M."/>
            <person name="Nagase T."/>
            <person name="Ohara O."/>
        </authorList>
    </citation>
    <scope>NUCLEOTIDE SEQUENCE [MRNA]</scope>
    <scope>TISSUE SPECIFICITY</scope>
    <source>
        <strain>Sprague-Dawley</strain>
        <tissue>Olfactory bulb</tissue>
    </source>
</reference>
<reference key="2">
    <citation type="journal article" date="2001" name="Neuron">
        <title>A photoreceptor-specific cadherin is essential for the structural integrity of the outer segment and for photoreceptor survival.</title>
        <authorList>
            <person name="Rattner A."/>
            <person name="Smallwood P.M."/>
            <person name="Williams J."/>
            <person name="Cooke C."/>
            <person name="Savchenko A."/>
            <person name="Lyubarsky A."/>
            <person name="Pugh E.N."/>
            <person name="Nathans J."/>
        </authorList>
    </citation>
    <scope>TISSUE SPECIFICITY</scope>
</reference>
<feature type="signal peptide" evidence="2">
    <location>
        <begin position="1"/>
        <end position="21"/>
    </location>
</feature>
<feature type="chain" id="PRO_0000318500" description="Cadherin-related family member 1">
    <location>
        <begin position="22"/>
        <end position="859"/>
    </location>
</feature>
<feature type="topological domain" description="Extracellular" evidence="2">
    <location>
        <begin position="22"/>
        <end position="701"/>
    </location>
</feature>
<feature type="transmembrane region" description="Helical" evidence="2">
    <location>
        <begin position="702"/>
        <end position="722"/>
    </location>
</feature>
<feature type="topological domain" description="Cytoplasmic" evidence="2">
    <location>
        <begin position="723"/>
        <end position="859"/>
    </location>
</feature>
<feature type="domain" description="Cadherin 1" evidence="3">
    <location>
        <begin position="36"/>
        <end position="135"/>
    </location>
</feature>
<feature type="domain" description="Cadherin 2" evidence="3">
    <location>
        <begin position="136"/>
        <end position="247"/>
    </location>
</feature>
<feature type="domain" description="Cadherin 3" evidence="3">
    <location>
        <begin position="248"/>
        <end position="354"/>
    </location>
</feature>
<feature type="domain" description="Cadherin 4" evidence="3">
    <location>
        <begin position="360"/>
        <end position="473"/>
    </location>
</feature>
<feature type="domain" description="Cadherin 5" evidence="3">
    <location>
        <begin position="474"/>
        <end position="577"/>
    </location>
</feature>
<feature type="domain" description="Cadherin 6" evidence="3">
    <location>
        <begin position="569"/>
        <end position="691"/>
    </location>
</feature>
<feature type="region of interest" description="Disordered" evidence="4">
    <location>
        <begin position="789"/>
        <end position="859"/>
    </location>
</feature>
<feature type="compositionally biased region" description="Pro residues" evidence="4">
    <location>
        <begin position="790"/>
        <end position="800"/>
    </location>
</feature>
<feature type="compositionally biased region" description="Polar residues" evidence="4">
    <location>
        <begin position="802"/>
        <end position="816"/>
    </location>
</feature>
<feature type="compositionally biased region" description="Low complexity" evidence="4">
    <location>
        <begin position="817"/>
        <end position="827"/>
    </location>
</feature>
<feature type="glycosylation site" description="N-linked (GlcNAc...) asparagine" evidence="2">
    <location>
        <position position="58"/>
    </location>
</feature>
<feature type="glycosylation site" description="N-linked (GlcNAc...) asparagine" evidence="2">
    <location>
        <position position="89"/>
    </location>
</feature>
<feature type="glycosylation site" description="N-linked (GlcNAc...) asparagine" evidence="2">
    <location>
        <position position="288"/>
    </location>
</feature>
<feature type="glycosylation site" description="N-linked (GlcNAc...) asparagine" evidence="2">
    <location>
        <position position="297"/>
    </location>
</feature>
<name>CDHR1_RAT</name>
<dbReference type="EMBL" id="AB053449">
    <property type="protein sequence ID" value="BAB61906.1"/>
    <property type="molecule type" value="mRNA"/>
</dbReference>
<dbReference type="RefSeq" id="NP_446024.1">
    <property type="nucleotide sequence ID" value="NM_053572.2"/>
</dbReference>
<dbReference type="SMR" id="Q91XU7"/>
<dbReference type="FunCoup" id="Q91XU7">
    <property type="interactions" value="199"/>
</dbReference>
<dbReference type="STRING" id="10116.ENSRNOP00000018631"/>
<dbReference type="GlyCosmos" id="Q91XU7">
    <property type="glycosylation" value="4 sites, No reported glycans"/>
</dbReference>
<dbReference type="GlyGen" id="Q91XU7">
    <property type="glycosylation" value="4 sites"/>
</dbReference>
<dbReference type="PhosphoSitePlus" id="Q91XU7"/>
<dbReference type="PaxDb" id="10116-ENSRNOP00000018631"/>
<dbReference type="GeneID" id="93662"/>
<dbReference type="KEGG" id="rno:93662"/>
<dbReference type="UCSC" id="RGD:620420">
    <property type="organism name" value="rat"/>
</dbReference>
<dbReference type="AGR" id="RGD:620420"/>
<dbReference type="CTD" id="92211"/>
<dbReference type="RGD" id="620420">
    <property type="gene designation" value="Cdhr1"/>
</dbReference>
<dbReference type="VEuPathDB" id="HostDB:ENSRNOG00000013330"/>
<dbReference type="eggNOG" id="KOG3594">
    <property type="taxonomic scope" value="Eukaryota"/>
</dbReference>
<dbReference type="HOGENOM" id="CLU_017357_0_0_1"/>
<dbReference type="InParanoid" id="Q91XU7"/>
<dbReference type="OrthoDB" id="58650at9989"/>
<dbReference type="PhylomeDB" id="Q91XU7"/>
<dbReference type="PRO" id="PR:Q91XU7"/>
<dbReference type="Proteomes" id="UP000002494">
    <property type="component" value="Chromosome 16"/>
</dbReference>
<dbReference type="Bgee" id="ENSRNOG00000013330">
    <property type="expression patterns" value="Expressed in thymus and 10 other cell types or tissues"/>
</dbReference>
<dbReference type="GO" id="GO:0042622">
    <property type="term" value="C:photoreceptor outer segment membrane"/>
    <property type="evidence" value="ECO:0000266"/>
    <property type="project" value="RGD"/>
</dbReference>
<dbReference type="GO" id="GO:0005886">
    <property type="term" value="C:plasma membrane"/>
    <property type="evidence" value="ECO:0000266"/>
    <property type="project" value="RGD"/>
</dbReference>
<dbReference type="GO" id="GO:0005509">
    <property type="term" value="F:calcium ion binding"/>
    <property type="evidence" value="ECO:0007669"/>
    <property type="project" value="InterPro"/>
</dbReference>
<dbReference type="GO" id="GO:0007155">
    <property type="term" value="P:cell adhesion"/>
    <property type="evidence" value="ECO:0000318"/>
    <property type="project" value="GO_Central"/>
</dbReference>
<dbReference type="GO" id="GO:0007156">
    <property type="term" value="P:homophilic cell adhesion via plasma membrane adhesion molecules"/>
    <property type="evidence" value="ECO:0007669"/>
    <property type="project" value="InterPro"/>
</dbReference>
<dbReference type="GO" id="GO:0045494">
    <property type="term" value="P:photoreceptor cell maintenance"/>
    <property type="evidence" value="ECO:0000266"/>
    <property type="project" value="RGD"/>
</dbReference>
<dbReference type="GO" id="GO:0008594">
    <property type="term" value="P:photoreceptor cell morphogenesis"/>
    <property type="evidence" value="ECO:0000266"/>
    <property type="project" value="RGD"/>
</dbReference>
<dbReference type="GO" id="GO:0035845">
    <property type="term" value="P:photoreceptor cell outer segment organization"/>
    <property type="evidence" value="ECO:0000266"/>
    <property type="project" value="RGD"/>
</dbReference>
<dbReference type="CDD" id="cd11304">
    <property type="entry name" value="Cadherin_repeat"/>
    <property type="match status" value="6"/>
</dbReference>
<dbReference type="FunFam" id="2.60.40.60:FF:000111">
    <property type="entry name" value="Cadherin-related family member 1"/>
    <property type="match status" value="1"/>
</dbReference>
<dbReference type="FunFam" id="2.60.40.60:FF:000113">
    <property type="entry name" value="Cadherin-related family member 1"/>
    <property type="match status" value="1"/>
</dbReference>
<dbReference type="FunFam" id="2.60.40.60:FF:000122">
    <property type="entry name" value="Cadherin-related family member 1"/>
    <property type="match status" value="1"/>
</dbReference>
<dbReference type="FunFam" id="2.60.40.60:FF:000124">
    <property type="entry name" value="Cadherin-related family member 1"/>
    <property type="match status" value="1"/>
</dbReference>
<dbReference type="FunFam" id="2.60.40.60:FF:000126">
    <property type="entry name" value="Cadherin-related family member 1"/>
    <property type="match status" value="1"/>
</dbReference>
<dbReference type="FunFam" id="2.60.40.60:FF:000177">
    <property type="entry name" value="Cadherin-related family member 1"/>
    <property type="match status" value="1"/>
</dbReference>
<dbReference type="Gene3D" id="2.60.40.60">
    <property type="entry name" value="Cadherins"/>
    <property type="match status" value="6"/>
</dbReference>
<dbReference type="InterPro" id="IPR039808">
    <property type="entry name" value="Cadherin"/>
</dbReference>
<dbReference type="InterPro" id="IPR002126">
    <property type="entry name" value="Cadherin-like_dom"/>
</dbReference>
<dbReference type="InterPro" id="IPR015919">
    <property type="entry name" value="Cadherin-like_sf"/>
</dbReference>
<dbReference type="InterPro" id="IPR020894">
    <property type="entry name" value="Cadherin_CS"/>
</dbReference>
<dbReference type="PANTHER" id="PTHR24027:SF438">
    <property type="entry name" value="CADHERIN 23"/>
    <property type="match status" value="1"/>
</dbReference>
<dbReference type="PANTHER" id="PTHR24027">
    <property type="entry name" value="CADHERIN-23"/>
    <property type="match status" value="1"/>
</dbReference>
<dbReference type="Pfam" id="PF00028">
    <property type="entry name" value="Cadherin"/>
    <property type="match status" value="5"/>
</dbReference>
<dbReference type="PRINTS" id="PR00205">
    <property type="entry name" value="CADHERIN"/>
</dbReference>
<dbReference type="SMART" id="SM00112">
    <property type="entry name" value="CA"/>
    <property type="match status" value="6"/>
</dbReference>
<dbReference type="SUPFAM" id="SSF49313">
    <property type="entry name" value="Cadherin-like"/>
    <property type="match status" value="6"/>
</dbReference>
<dbReference type="PROSITE" id="PS00232">
    <property type="entry name" value="CADHERIN_1"/>
    <property type="match status" value="2"/>
</dbReference>
<dbReference type="PROSITE" id="PS50268">
    <property type="entry name" value="CADHERIN_2"/>
    <property type="match status" value="6"/>
</dbReference>
<accession>Q91XU7</accession>
<evidence type="ECO:0000250" key="1"/>
<evidence type="ECO:0000255" key="2"/>
<evidence type="ECO:0000255" key="3">
    <source>
        <dbReference type="PROSITE-ProRule" id="PRU00043"/>
    </source>
</evidence>
<evidence type="ECO:0000256" key="4">
    <source>
        <dbReference type="SAM" id="MobiDB-lite"/>
    </source>
</evidence>
<evidence type="ECO:0000269" key="5">
    <source>
    </source>
</evidence>
<evidence type="ECO:0000269" key="6">
    <source>
    </source>
</evidence>
<sequence>MRRGPQVALVLGLLCIYLAQANFAPHFFDNGVGSTNGNMALFSLPEDTPVGSHVYTLNGTDPEGDPISYHISFDPSTRSVFSVDPNFGNITLVEELDREREDEIEAIISISDGLNLVAEKVVIVVTDANDEAPRFLQEPYNILVPENTPAGSSIFKVQAEDKDTGSGGSVTYFLQSLHSSKFTVDRHSGVLRLQAGATLDYEKSRAHFITVVAKDGGGRLRGADVVFSATTTVTINVEDVQDTAPIFVGTPYYGYVYEDTLPGSEVLTVVAIDGDRGKPNHILYRLLNESDGLFEINETSGAISVLQSPAQLRREVYELHVQVTEVNSSGSPAAQSTVPVIIRIVDLNNHPPTFYGESGPQNKFELSMFEHPPQGEILRGLKITVNDSDQGANAKFNLRLVGPGGIFRVVPQTVLNEAQVTIIVENSAAIDFEKSKSLTFKLLAIEVNTPEKFSSTADIVIQLLDTNDNVPKFTSHYYIARIPENVPGGSNVVAVTAVDPDTGPWGKVQYSIYGTGSDLFLIHPSTGLIYTQPWASLDAEGTSRYNFYVKAEDMDGRYSLAEVFVTLLDVNDHYPQFVQSVQEKTMVLGTPLKIEATDQDAEEPNNLVDYSITRAEPVNVFDIDAHTGEIRLKNSIRSLEALHNITPSGEYSWSLQVQAKDRGSPSFSTTALLKIDITDTERLSRSSMAAFLIQTKDNPMKAVGVLAGVMAIVVAITVLISTATFWRNKKSNKVLPVRRVLRRRPSPAPHTVRIEWLKFRRAKAASKFILKEDPPNENCNNSRVGVTVPPRAPALPPPPKMASSTVAQQTVPTVSGSLTPQPSQQLPTPKPLGGPAQSSLVSELKQKFEKKSLGNKAYV</sequence>